<dbReference type="EC" id="2.7.1.-" evidence="14"/>
<dbReference type="EMBL" id="AB006424">
    <property type="protein sequence ID" value="BAA33132.1"/>
    <property type="molecule type" value="Genomic_DNA"/>
</dbReference>
<dbReference type="EMBL" id="AL009126">
    <property type="protein sequence ID" value="CAB12029.1"/>
    <property type="molecule type" value="Genomic_DNA"/>
</dbReference>
<dbReference type="EMBL" id="U15147">
    <property type="protein sequence ID" value="AAA82877.1"/>
    <property type="molecule type" value="Genomic_DNA"/>
</dbReference>
<dbReference type="PIR" id="D69750">
    <property type="entry name" value="D69750"/>
</dbReference>
<dbReference type="RefSeq" id="NP_388117.1">
    <property type="nucleotide sequence ID" value="NC_000964.3"/>
</dbReference>
<dbReference type="SMR" id="P39816"/>
<dbReference type="FunCoup" id="P39816">
    <property type="interactions" value="175"/>
</dbReference>
<dbReference type="STRING" id="224308.BSU02350"/>
<dbReference type="TCDB" id="4.A.1.1.6">
    <property type="family name" value="the pts glucose-glucoside (glc) family"/>
</dbReference>
<dbReference type="PaxDb" id="224308-BSU02350"/>
<dbReference type="EnsemblBacteria" id="CAB12029">
    <property type="protein sequence ID" value="CAB12029"/>
    <property type="gene ID" value="BSU_02350"/>
</dbReference>
<dbReference type="GeneID" id="938418"/>
<dbReference type="KEGG" id="bsu:BSU02350"/>
<dbReference type="PATRIC" id="fig|224308.179.peg.241"/>
<dbReference type="eggNOG" id="COG1263">
    <property type="taxonomic scope" value="Bacteria"/>
</dbReference>
<dbReference type="eggNOG" id="COG1264">
    <property type="taxonomic scope" value="Bacteria"/>
</dbReference>
<dbReference type="eggNOG" id="COG2190">
    <property type="taxonomic scope" value="Bacteria"/>
</dbReference>
<dbReference type="InParanoid" id="P39816"/>
<dbReference type="OrthoDB" id="9764327at2"/>
<dbReference type="PhylomeDB" id="P39816"/>
<dbReference type="BioCyc" id="BSUB:BSU02350-MONOMER"/>
<dbReference type="Proteomes" id="UP000001570">
    <property type="component" value="Chromosome"/>
</dbReference>
<dbReference type="GO" id="GO:0005886">
    <property type="term" value="C:plasma membrane"/>
    <property type="evidence" value="ECO:0000318"/>
    <property type="project" value="GO_Central"/>
</dbReference>
<dbReference type="GO" id="GO:0055056">
    <property type="term" value="F:D-glucose transmembrane transporter activity"/>
    <property type="evidence" value="ECO:0007669"/>
    <property type="project" value="InterPro"/>
</dbReference>
<dbReference type="GO" id="GO:0016301">
    <property type="term" value="F:kinase activity"/>
    <property type="evidence" value="ECO:0007669"/>
    <property type="project" value="UniProtKB-KW"/>
</dbReference>
<dbReference type="GO" id="GO:0103111">
    <property type="term" value="F:protein-N(pi)-phosphohistidine--N-acetyl-D-glucosamine phosphotransferase activity"/>
    <property type="evidence" value="ECO:0007669"/>
    <property type="project" value="UniProtKB-EC"/>
</dbReference>
<dbReference type="GO" id="GO:0008982">
    <property type="term" value="F:protein-N(PI)-phosphohistidine-sugar phosphotransferase activity"/>
    <property type="evidence" value="ECO:0007669"/>
    <property type="project" value="InterPro"/>
</dbReference>
<dbReference type="GO" id="GO:0090563">
    <property type="term" value="F:protein-phosphocysteine-sugar phosphotransferase activity"/>
    <property type="evidence" value="ECO:0000318"/>
    <property type="project" value="GO_Central"/>
</dbReference>
<dbReference type="GO" id="GO:1904659">
    <property type="term" value="P:D-glucose transmembrane transport"/>
    <property type="evidence" value="ECO:0007669"/>
    <property type="project" value="InterPro"/>
</dbReference>
<dbReference type="GO" id="GO:0009401">
    <property type="term" value="P:phosphoenolpyruvate-dependent sugar phosphotransferase system"/>
    <property type="evidence" value="ECO:0000318"/>
    <property type="project" value="GO_Central"/>
</dbReference>
<dbReference type="CDD" id="cd00210">
    <property type="entry name" value="PTS_IIA_glc"/>
    <property type="match status" value="1"/>
</dbReference>
<dbReference type="CDD" id="cd00212">
    <property type="entry name" value="PTS_IIB_glc"/>
    <property type="match status" value="1"/>
</dbReference>
<dbReference type="FunFam" id="2.70.70.10:FF:000001">
    <property type="entry name" value="PTS system glucose-specific IIA component"/>
    <property type="match status" value="1"/>
</dbReference>
<dbReference type="FunFam" id="3.30.1360.60:FF:000001">
    <property type="entry name" value="PTS system glucose-specific IIBC component PtsG"/>
    <property type="match status" value="1"/>
</dbReference>
<dbReference type="Gene3D" id="2.70.70.10">
    <property type="entry name" value="Glucose Permease (Domain IIA)"/>
    <property type="match status" value="1"/>
</dbReference>
<dbReference type="Gene3D" id="3.30.1360.60">
    <property type="entry name" value="Glucose permease domain IIB"/>
    <property type="match status" value="1"/>
</dbReference>
<dbReference type="InterPro" id="IPR011055">
    <property type="entry name" value="Dup_hybrid_motif"/>
</dbReference>
<dbReference type="InterPro" id="IPR036878">
    <property type="entry name" value="Glu_permease_IIB"/>
</dbReference>
<dbReference type="InterPro" id="IPR018113">
    <property type="entry name" value="PTrfase_EIIB_Cys"/>
</dbReference>
<dbReference type="InterPro" id="IPR001127">
    <property type="entry name" value="PTS_EIIA_1_perm"/>
</dbReference>
<dbReference type="InterPro" id="IPR003352">
    <property type="entry name" value="PTS_EIIC"/>
</dbReference>
<dbReference type="InterPro" id="IPR013013">
    <property type="entry name" value="PTS_EIIC_1"/>
</dbReference>
<dbReference type="InterPro" id="IPR050429">
    <property type="entry name" value="PTS_Glucose_EIICBA"/>
</dbReference>
<dbReference type="InterPro" id="IPR001996">
    <property type="entry name" value="PTS_IIB_1"/>
</dbReference>
<dbReference type="InterPro" id="IPR011299">
    <property type="entry name" value="PTS_IIBC_glc"/>
</dbReference>
<dbReference type="NCBIfam" id="TIGR00826">
    <property type="entry name" value="EIIB_glc"/>
    <property type="match status" value="1"/>
</dbReference>
<dbReference type="NCBIfam" id="TIGR00830">
    <property type="entry name" value="PTBA"/>
    <property type="match status" value="1"/>
</dbReference>
<dbReference type="NCBIfam" id="TIGR02002">
    <property type="entry name" value="PTS-II-BC-glcB"/>
    <property type="match status" value="1"/>
</dbReference>
<dbReference type="PANTHER" id="PTHR30009">
    <property type="entry name" value="CYTOCHROME C-TYPE SYNTHESIS PROTEIN AND PTS TRANSMEMBRANE COMPONENT"/>
    <property type="match status" value="1"/>
</dbReference>
<dbReference type="PANTHER" id="PTHR30009:SF20">
    <property type="entry name" value="PTS SYSTEM GLUCOSE-SPECIFIC EIICB COMPONENT-RELATED"/>
    <property type="match status" value="1"/>
</dbReference>
<dbReference type="Pfam" id="PF00358">
    <property type="entry name" value="PTS_EIIA_1"/>
    <property type="match status" value="1"/>
</dbReference>
<dbReference type="Pfam" id="PF00367">
    <property type="entry name" value="PTS_EIIB"/>
    <property type="match status" value="1"/>
</dbReference>
<dbReference type="Pfam" id="PF02378">
    <property type="entry name" value="PTS_EIIC"/>
    <property type="match status" value="1"/>
</dbReference>
<dbReference type="SUPFAM" id="SSF51261">
    <property type="entry name" value="Duplicated hybrid motif"/>
    <property type="match status" value="1"/>
</dbReference>
<dbReference type="SUPFAM" id="SSF55604">
    <property type="entry name" value="Glucose permease domain IIB"/>
    <property type="match status" value="1"/>
</dbReference>
<dbReference type="PROSITE" id="PS51093">
    <property type="entry name" value="PTS_EIIA_TYPE_1"/>
    <property type="match status" value="1"/>
</dbReference>
<dbReference type="PROSITE" id="PS00371">
    <property type="entry name" value="PTS_EIIA_TYPE_1_HIS"/>
    <property type="match status" value="1"/>
</dbReference>
<dbReference type="PROSITE" id="PS51098">
    <property type="entry name" value="PTS_EIIB_TYPE_1"/>
    <property type="match status" value="1"/>
</dbReference>
<dbReference type="PROSITE" id="PS01035">
    <property type="entry name" value="PTS_EIIB_TYPE_1_CYS"/>
    <property type="match status" value="1"/>
</dbReference>
<dbReference type="PROSITE" id="PS51103">
    <property type="entry name" value="PTS_EIIC_TYPE_1"/>
    <property type="match status" value="1"/>
</dbReference>
<sequence>MFKKAFQILQQLGRALMTPVAVLPAAGLLLRFGDKDLLNIPIIKDAGGVVFDNLPLIFAVGVAIGLAGGEGVAGLAAVIGYLILTVTLDNMGKLLGLQPPYEGAEHLIDMGVFGGIIIGLLAAYLYKRFSSIELHPVLGFFSGKRFVPIITSVSSLVIGVIFSFVWPLIQNGINAASSLIADSTVGLFFYATIYRLLIPFGLHHIFYTPFYFMMGEYTDPSTGNTVTGDLTRFFAGDPTAGRFMMGDFPYMIFCLPAVALAIIHTARPEKKKMISGVMISAALTSMLTGITEPVEFSFLFVAPVLYLINSILAGVIFVVCDLFHVRHGYTFSGGGIDYVLNYGLSTNGWVVIPVGIVFAFIYYYLFRFAILKWNLKTPGRETDEDGQNEEKAPVAKDQLAFHVLQALGGQQNIANLDACITRLRVTVHQPSQVCKDELKRLGAVGVLEVNNNFQAIFGTKSDALKDDIKTIMAGGVPATAAALDTVTDKPLKPDSDETFIYPIKGETVSLGDVPDQVFSEKMMGEGFAIIPSEGKVVAPADGEIVSIFPTKHAIGFMSAGGTEILIHVGIDTVKLNGEGFEAHVTSGQAVKQGELLLTFDLNYIKQHAASAITPVIFTNTSEEDLKHIQMK</sequence>
<proteinExistence type="evidence at transcript level"/>
<name>PTW3C_BACSU</name>
<evidence type="ECO:0000250" key="1">
    <source>
        <dbReference type="UniProtKB" id="P09323"/>
    </source>
</evidence>
<evidence type="ECO:0000250" key="2">
    <source>
        <dbReference type="UniProtKB" id="P69783"/>
    </source>
</evidence>
<evidence type="ECO:0000250" key="3">
    <source>
        <dbReference type="UniProtKB" id="P69786"/>
    </source>
</evidence>
<evidence type="ECO:0000255" key="4"/>
<evidence type="ECO:0000255" key="5">
    <source>
        <dbReference type="PROSITE-ProRule" id="PRU00416"/>
    </source>
</evidence>
<evidence type="ECO:0000255" key="6">
    <source>
        <dbReference type="PROSITE-ProRule" id="PRU00421"/>
    </source>
</evidence>
<evidence type="ECO:0000255" key="7">
    <source>
        <dbReference type="PROSITE-ProRule" id="PRU00426"/>
    </source>
</evidence>
<evidence type="ECO:0000269" key="8">
    <source>
    </source>
</evidence>
<evidence type="ECO:0000269" key="9">
    <source>
    </source>
</evidence>
<evidence type="ECO:0000269" key="10">
    <source>
    </source>
</evidence>
<evidence type="ECO:0000269" key="11">
    <source>
    </source>
</evidence>
<evidence type="ECO:0000303" key="12">
    <source>
    </source>
</evidence>
<evidence type="ECO:0000305" key="13"/>
<evidence type="ECO:0000305" key="14">
    <source>
    </source>
</evidence>
<gene>
    <name evidence="12" type="primary">gamP</name>
    <name type="synonym">ybfS</name>
    <name type="synonym">yzfA</name>
    <name type="ordered locus">BSU02350</name>
</gene>
<feature type="chain" id="PRO_0000186710" description="PTS system glucosamine-specific EIICBA component">
    <location>
        <begin position="1"/>
        <end position="631"/>
    </location>
</feature>
<feature type="transmembrane region" description="Helical" evidence="4">
    <location>
        <begin position="12"/>
        <end position="32"/>
    </location>
</feature>
<feature type="transmembrane region" description="Helical" evidence="4">
    <location>
        <begin position="56"/>
        <end position="76"/>
    </location>
</feature>
<feature type="transmembrane region" description="Helical" evidence="4">
    <location>
        <begin position="106"/>
        <end position="126"/>
    </location>
</feature>
<feature type="transmembrane region" description="Helical" evidence="4">
    <location>
        <begin position="149"/>
        <end position="169"/>
    </location>
</feature>
<feature type="transmembrane region" description="Helical" evidence="4">
    <location>
        <begin position="196"/>
        <end position="216"/>
    </location>
</feature>
<feature type="transmembrane region" description="Helical" evidence="4">
    <location>
        <begin position="243"/>
        <end position="263"/>
    </location>
</feature>
<feature type="transmembrane region" description="Helical" evidence="4">
    <location>
        <begin position="298"/>
        <end position="318"/>
    </location>
</feature>
<feature type="transmembrane region" description="Helical" evidence="4">
    <location>
        <begin position="350"/>
        <end position="370"/>
    </location>
</feature>
<feature type="domain" description="PTS EIIC type-1" evidence="7">
    <location>
        <begin position="3"/>
        <end position="382"/>
    </location>
</feature>
<feature type="domain" description="PTS EIIB type-1" evidence="6">
    <location>
        <begin position="397"/>
        <end position="478"/>
    </location>
</feature>
<feature type="domain" description="PTS EIIA type-1" evidence="5">
    <location>
        <begin position="515"/>
        <end position="619"/>
    </location>
</feature>
<feature type="active site" description="Phosphocysteine intermediate; for EIIB activity" evidence="6">
    <location>
        <position position="419"/>
    </location>
</feature>
<feature type="active site" description="Tele-phosphohistidine intermediate; for EIIA activity" evidence="5">
    <location>
        <position position="567"/>
    </location>
</feature>
<feature type="site" description="Important for phospho-donor activity" evidence="2">
    <location>
        <position position="552"/>
    </location>
</feature>
<feature type="modified residue" description="Phosphocysteine" evidence="3">
    <location>
        <position position="419"/>
    </location>
</feature>
<feature type="modified residue" description="Phosphohistidine" evidence="2">
    <location>
        <position position="567"/>
    </location>
</feature>
<accession>P39816</accession>
<organism>
    <name type="scientific">Bacillus subtilis (strain 168)</name>
    <dbReference type="NCBI Taxonomy" id="224308"/>
    <lineage>
        <taxon>Bacteria</taxon>
        <taxon>Bacillati</taxon>
        <taxon>Bacillota</taxon>
        <taxon>Bacilli</taxon>
        <taxon>Bacillales</taxon>
        <taxon>Bacillaceae</taxon>
        <taxon>Bacillus</taxon>
    </lineage>
</organism>
<keyword id="KW-1003">Cell membrane</keyword>
<keyword id="KW-0418">Kinase</keyword>
<keyword id="KW-0472">Membrane</keyword>
<keyword id="KW-0597">Phosphoprotein</keyword>
<keyword id="KW-0598">Phosphotransferase system</keyword>
<keyword id="KW-1185">Reference proteome</keyword>
<keyword id="KW-0762">Sugar transport</keyword>
<keyword id="KW-0808">Transferase</keyword>
<keyword id="KW-0812">Transmembrane</keyword>
<keyword id="KW-1133">Transmembrane helix</keyword>
<keyword id="KW-0813">Transport</keyword>
<comment type="function">
    <text evidence="1 8 9">The phosphoenolpyruvate-dependent sugar phosphotransferase system (sugar PTS), a major carbohydrate active transport system, catalyzes the phosphorylation of incoming sugar substrates concomitantly with their translocation across the cell membrane (By similarity). This system is involved in glucosamine transport (PubMed:10627040, PubMed:23667565). In vitro, when expressed in the absence of GamR and NagP, can transport N-acetylglucosamine (PubMed:23667565).</text>
</comment>
<comment type="function">
    <text evidence="11">In addition, plays an important role in the phosphorylation of EIIA-deficient PTS transporters (PubMed:30038046). The EIIA domain can transfer a phosphoryl group to EIIA-deficient PTS transporters, enabling growth with maltose, N-acetylglucosamine, sucrose or trehalose as the sole carbon source (PubMed:30038046).</text>
</comment>
<comment type="catalytic activity">
    <reaction evidence="14">
        <text>D-glucosamine(out) + N(pros)-phospho-L-histidyl-[protein] = D-glucosamine 6-phosphate(in) + L-histidyl-[protein]</text>
        <dbReference type="Rhea" id="RHEA:37359"/>
        <dbReference type="Rhea" id="RHEA-COMP:9745"/>
        <dbReference type="Rhea" id="RHEA-COMP:9746"/>
        <dbReference type="ChEBI" id="CHEBI:29979"/>
        <dbReference type="ChEBI" id="CHEBI:58723"/>
        <dbReference type="ChEBI" id="CHEBI:58725"/>
        <dbReference type="ChEBI" id="CHEBI:64837"/>
    </reaction>
</comment>
<comment type="subcellular location">
    <subcellularLocation>
        <location evidence="7">Cell membrane</location>
        <topology evidence="7">Multi-pass membrane protein</topology>
    </subcellularLocation>
</comment>
<comment type="induction">
    <text evidence="8 9 10">Part of the gamAP operon (PubMed:10627040). Strongly expressed during growth on glucosamine (PubMed:23667565). Expression is repressed by the HTH-type transcriptional regulator GamR (PubMed:23667565, PubMed:24673833).</text>
</comment>
<comment type="domain">
    <text evidence="7">The EIIC domain type-1 forms the PTS system translocation channel and contains the specific substrate-binding site.</text>
</comment>
<comment type="domain">
    <text evidence="6">The PTS EIIB type-1 domain is phosphorylated by phospho-EIIA on a cysteinyl residue. Then, it transfers the phosphoryl group to the sugar substrate concomitantly with the sugar uptake processed by the PTS EIIC type-1 domain.</text>
</comment>
<comment type="domain">
    <text evidence="5">The PTS EIIA type-1 domain is phosphorylated by phospho-HPr on a histidyl residue. Then, it transfers the phosphoryl group to the PTS EIIB type-1 domain.</text>
</comment>
<comment type="disruption phenotype">
    <text evidence="8 9">Reizer et al. found that mutation of the gene results in impaired growth in the presence of glucosamine (PubMed:10627040). However, Gaugue et al. found that deletion of the gene has only a minimal effect on growth on either glucosamine or N-acetylglucosamine (PubMed:23667565). The gamP-nagP double mutant can still grow normally on glucosamine, but the gamP-ptsG double mutant grows slower on glucosamine (PubMed:23667565).</text>
</comment>
<reference key="1">
    <citation type="submission" date="1997-07" db="EMBL/GenBank/DDBJ databases">
        <title>Sequence analysis of the 70kb region between 17 and 23 degree of the Bacillus subtilis chromosome.</title>
        <authorList>
            <person name="Haga K."/>
            <person name="Liu H."/>
            <person name="Yasumoto K."/>
            <person name="Takahashi H."/>
            <person name="Yoshikawa H."/>
        </authorList>
    </citation>
    <scope>NUCLEOTIDE SEQUENCE [GENOMIC DNA]</scope>
    <source>
        <strain>168</strain>
    </source>
</reference>
<reference key="2">
    <citation type="journal article" date="1997" name="Nature">
        <title>The complete genome sequence of the Gram-positive bacterium Bacillus subtilis.</title>
        <authorList>
            <person name="Kunst F."/>
            <person name="Ogasawara N."/>
            <person name="Moszer I."/>
            <person name="Albertini A.M."/>
            <person name="Alloni G."/>
            <person name="Azevedo V."/>
            <person name="Bertero M.G."/>
            <person name="Bessieres P."/>
            <person name="Bolotin A."/>
            <person name="Borchert S."/>
            <person name="Borriss R."/>
            <person name="Boursier L."/>
            <person name="Brans A."/>
            <person name="Braun M."/>
            <person name="Brignell S.C."/>
            <person name="Bron S."/>
            <person name="Brouillet S."/>
            <person name="Bruschi C.V."/>
            <person name="Caldwell B."/>
            <person name="Capuano V."/>
            <person name="Carter N.M."/>
            <person name="Choi S.-K."/>
            <person name="Codani J.-J."/>
            <person name="Connerton I.F."/>
            <person name="Cummings N.J."/>
            <person name="Daniel R.A."/>
            <person name="Denizot F."/>
            <person name="Devine K.M."/>
            <person name="Duesterhoeft A."/>
            <person name="Ehrlich S.D."/>
            <person name="Emmerson P.T."/>
            <person name="Entian K.-D."/>
            <person name="Errington J."/>
            <person name="Fabret C."/>
            <person name="Ferrari E."/>
            <person name="Foulger D."/>
            <person name="Fritz C."/>
            <person name="Fujita M."/>
            <person name="Fujita Y."/>
            <person name="Fuma S."/>
            <person name="Galizzi A."/>
            <person name="Galleron N."/>
            <person name="Ghim S.-Y."/>
            <person name="Glaser P."/>
            <person name="Goffeau A."/>
            <person name="Golightly E.J."/>
            <person name="Grandi G."/>
            <person name="Guiseppi G."/>
            <person name="Guy B.J."/>
            <person name="Haga K."/>
            <person name="Haiech J."/>
            <person name="Harwood C.R."/>
            <person name="Henaut A."/>
            <person name="Hilbert H."/>
            <person name="Holsappel S."/>
            <person name="Hosono S."/>
            <person name="Hullo M.-F."/>
            <person name="Itaya M."/>
            <person name="Jones L.-M."/>
            <person name="Joris B."/>
            <person name="Karamata D."/>
            <person name="Kasahara Y."/>
            <person name="Klaerr-Blanchard M."/>
            <person name="Klein C."/>
            <person name="Kobayashi Y."/>
            <person name="Koetter P."/>
            <person name="Koningstein G."/>
            <person name="Krogh S."/>
            <person name="Kumano M."/>
            <person name="Kurita K."/>
            <person name="Lapidus A."/>
            <person name="Lardinois S."/>
            <person name="Lauber J."/>
            <person name="Lazarevic V."/>
            <person name="Lee S.-M."/>
            <person name="Levine A."/>
            <person name="Liu H."/>
            <person name="Masuda S."/>
            <person name="Mauel C."/>
            <person name="Medigue C."/>
            <person name="Medina N."/>
            <person name="Mellado R.P."/>
            <person name="Mizuno M."/>
            <person name="Moestl D."/>
            <person name="Nakai S."/>
            <person name="Noback M."/>
            <person name="Noone D."/>
            <person name="O'Reilly M."/>
            <person name="Ogawa K."/>
            <person name="Ogiwara A."/>
            <person name="Oudega B."/>
            <person name="Park S.-H."/>
            <person name="Parro V."/>
            <person name="Pohl T.M."/>
            <person name="Portetelle D."/>
            <person name="Porwollik S."/>
            <person name="Prescott A.M."/>
            <person name="Presecan E."/>
            <person name="Pujic P."/>
            <person name="Purnelle B."/>
            <person name="Rapoport G."/>
            <person name="Rey M."/>
            <person name="Reynolds S."/>
            <person name="Rieger M."/>
            <person name="Rivolta C."/>
            <person name="Rocha E."/>
            <person name="Roche B."/>
            <person name="Rose M."/>
            <person name="Sadaie Y."/>
            <person name="Sato T."/>
            <person name="Scanlan E."/>
            <person name="Schleich S."/>
            <person name="Schroeter R."/>
            <person name="Scoffone F."/>
            <person name="Sekiguchi J."/>
            <person name="Sekowska A."/>
            <person name="Seror S.J."/>
            <person name="Serror P."/>
            <person name="Shin B.-S."/>
            <person name="Soldo B."/>
            <person name="Sorokin A."/>
            <person name="Tacconi E."/>
            <person name="Takagi T."/>
            <person name="Takahashi H."/>
            <person name="Takemaru K."/>
            <person name="Takeuchi M."/>
            <person name="Tamakoshi A."/>
            <person name="Tanaka T."/>
            <person name="Terpstra P."/>
            <person name="Tognoni A."/>
            <person name="Tosato V."/>
            <person name="Uchiyama S."/>
            <person name="Vandenbol M."/>
            <person name="Vannier F."/>
            <person name="Vassarotti A."/>
            <person name="Viari A."/>
            <person name="Wambutt R."/>
            <person name="Wedler E."/>
            <person name="Wedler H."/>
            <person name="Weitzenegger T."/>
            <person name="Winters P."/>
            <person name="Wipat A."/>
            <person name="Yamamoto H."/>
            <person name="Yamane K."/>
            <person name="Yasumoto K."/>
            <person name="Yata K."/>
            <person name="Yoshida K."/>
            <person name="Yoshikawa H.-F."/>
            <person name="Zumstein E."/>
            <person name="Yoshikawa H."/>
            <person name="Danchin A."/>
        </authorList>
    </citation>
    <scope>NUCLEOTIDE SEQUENCE [LARGE SCALE GENOMIC DNA]</scope>
    <source>
        <strain>168</strain>
    </source>
</reference>
<reference key="3">
    <citation type="journal article" date="1995" name="J. Bacteriol.">
        <title>Characterization of the proton/glutamate symport protein of Bacillus subtilis and its functional expression in Escherichia coli.</title>
        <authorList>
            <person name="Tolner B."/>
            <person name="Ubbink-Kok T."/>
            <person name="Poolman B."/>
            <person name="Konings W.N."/>
        </authorList>
    </citation>
    <scope>NUCLEOTIDE SEQUENCE [GENOMIC DNA] OF 515-631</scope>
    <source>
        <strain>168 / 6GM</strain>
    </source>
</reference>
<reference key="4">
    <citation type="journal article" date="1999" name="Microbiology">
        <title>Novel phosphotransferase system genes revealed by genome analysis - the complete complement of PTS proteins encoded within the genome of Bacillus subtilis.</title>
        <authorList>
            <person name="Reizer J."/>
            <person name="Bachem S."/>
            <person name="Reizer A."/>
            <person name="Arnaud M."/>
            <person name="Saier M.H. Jr."/>
            <person name="Stuelke J."/>
        </authorList>
    </citation>
    <scope>GENE NAME</scope>
    <scope>PUTATIVE FUNCTION</scope>
    <scope>DISRUPTION PHENOTYPE</scope>
    <scope>OPERON STRUCTURE</scope>
</reference>
<reference key="5">
    <citation type="journal article" date="2013" name="PLoS ONE">
        <title>The use of amino sugars by Bacillus subtilis: presence of a unique operon for the catabolism of glucosamine.</title>
        <authorList>
            <person name="Gaugue I."/>
            <person name="Oberto J."/>
            <person name="Putzer H."/>
            <person name="Plumbridge J."/>
        </authorList>
    </citation>
    <scope>FUNCTION</scope>
    <scope>INDUCTION</scope>
    <scope>DISRUPTION PHENOTYPE</scope>
    <source>
        <strain>168</strain>
    </source>
</reference>
<reference key="6">
    <citation type="journal article" date="2014" name="Mol. Microbiol.">
        <title>Regulation of amino sugar utilization in Bacillus subtilis by the GntR family regulators, NagR and GamR.</title>
        <authorList>
            <person name="Gaugue I."/>
            <person name="Oberto J."/>
            <person name="Plumbridge J."/>
        </authorList>
    </citation>
    <scope>INDUCTION</scope>
</reference>
<reference key="7">
    <citation type="journal article" date="2018" name="J. Bacteriol.">
        <title>Cross talk among transporters of the phosphoenolpyruvate-dependent phosphotransferase system in Bacillus subtilis.</title>
        <authorList>
            <person name="Morabbi Heravi K."/>
            <person name="Altenbuchner J."/>
        </authorList>
    </citation>
    <scope>FUNCTION</scope>
</reference>
<protein>
    <recommendedName>
        <fullName evidence="13">PTS system glucosamine-specific EIICBA component</fullName>
    </recommendedName>
    <domain>
        <recommendedName>
            <fullName evidence="13">Glucosamine permease IIC component</fullName>
        </recommendedName>
        <alternativeName>
            <fullName evidence="13">PTS system glucosamine-specific EIIC component</fullName>
        </alternativeName>
    </domain>
    <domain>
        <recommendedName>
            <fullName evidence="13">Glucosamine-specific phosphotransferase enzyme IIB component</fullName>
            <ecNumber evidence="14">2.7.1.-</ecNumber>
        </recommendedName>
        <alternativeName>
            <fullName evidence="13">PTS system glucosamine-specific EIIB component</fullName>
        </alternativeName>
    </domain>
    <domain>
        <recommendedName>
            <fullName evidence="13">Glucosamine-specific phosphotransferase enzyme IIA component</fullName>
        </recommendedName>
        <alternativeName>
            <fullName evidence="13">PTS system glucosamine-specific EIIA component</fullName>
        </alternativeName>
    </domain>
</protein>